<proteinExistence type="evidence at protein level"/>
<name>SRP19_ARATH</name>
<comment type="function">
    <text evidence="1">Component of the signal recognition particle (SRP) complex, a ribonucleoprotein complex that mediates the cotranslational targeting of secretory and membrane proteins to the endoplasmic reticulum (ER) (By similarity). Binds directly to 7SL RNA (By similarity). Mediates binding of SRP54 to the SRP complex (By similarity).</text>
</comment>
<comment type="subunit">
    <text evidence="2">Component of a signal recognition particle complex that consists of a 7SL RNA molecule of 300 nucleotides and six protein subunits: SRP72, SRP68, SRP54, SRP19, SRP14 and SRP9.</text>
</comment>
<comment type="subcellular location">
    <subcellularLocation>
        <location evidence="2">Cytoplasm</location>
    </subcellularLocation>
    <subcellularLocation>
        <location evidence="2">Nucleus</location>
        <location evidence="2">Nucleolus</location>
    </subcellularLocation>
</comment>
<comment type="similarity">
    <text evidence="4">Belongs to the SRP19 family.</text>
</comment>
<comment type="sequence caution" evidence="4">
    <conflict type="erroneous gene model prediction">
        <sequence resource="EMBL-CDS" id="AAF79519"/>
    </conflict>
</comment>
<gene>
    <name type="primary">SRP19</name>
    <name type="ordered locus">At1g48160</name>
    <name type="ORF">F21D18.11</name>
</gene>
<accession>Q943Z6</accession>
<accession>Q9LNG9</accession>
<sequence length="145" mass="16274">MDSGTINIKKWVVIYPVYINSKKTVAEGRRISVSKSCENPNCIEISDCCKHLKLPSAVEIDKAYPRDFMQVGRVRVQLKREDGTLLNPAITSRKHLMQKIAELVPRHPERVKKQEAQKAKKQEPQATTSTSGTSSKSGKGGKKKR</sequence>
<feature type="chain" id="PRO_0000135202" description="Signal recognition particle 19 kDa protein">
    <location>
        <begin position="1"/>
        <end position="145"/>
    </location>
</feature>
<feature type="region of interest" description="Disordered" evidence="3">
    <location>
        <begin position="104"/>
        <end position="145"/>
    </location>
</feature>
<feature type="compositionally biased region" description="Basic and acidic residues" evidence="3">
    <location>
        <begin position="104"/>
        <end position="123"/>
    </location>
</feature>
<feature type="compositionally biased region" description="Low complexity" evidence="3">
    <location>
        <begin position="124"/>
        <end position="137"/>
    </location>
</feature>
<feature type="modified residue" description="N-acetylmethionine" evidence="5">
    <location>
        <position position="1"/>
    </location>
</feature>
<keyword id="KW-0007">Acetylation</keyword>
<keyword id="KW-0963">Cytoplasm</keyword>
<keyword id="KW-0539">Nucleus</keyword>
<keyword id="KW-1185">Reference proteome</keyword>
<keyword id="KW-0687">Ribonucleoprotein</keyword>
<keyword id="KW-0694">RNA-binding</keyword>
<keyword id="KW-0733">Signal recognition particle</keyword>
<organism>
    <name type="scientific">Arabidopsis thaliana</name>
    <name type="common">Mouse-ear cress</name>
    <dbReference type="NCBI Taxonomy" id="3702"/>
    <lineage>
        <taxon>Eukaryota</taxon>
        <taxon>Viridiplantae</taxon>
        <taxon>Streptophyta</taxon>
        <taxon>Embryophyta</taxon>
        <taxon>Tracheophyta</taxon>
        <taxon>Spermatophyta</taxon>
        <taxon>Magnoliopsida</taxon>
        <taxon>eudicotyledons</taxon>
        <taxon>Gunneridae</taxon>
        <taxon>Pentapetalae</taxon>
        <taxon>rosids</taxon>
        <taxon>malvids</taxon>
        <taxon>Brassicales</taxon>
        <taxon>Brassicaceae</taxon>
        <taxon>Camelineae</taxon>
        <taxon>Arabidopsis</taxon>
    </lineage>
</organism>
<protein>
    <recommendedName>
        <fullName>Signal recognition particle 19 kDa protein</fullName>
        <shortName>SRP19</shortName>
    </recommendedName>
</protein>
<dbReference type="EMBL" id="AC023673">
    <property type="protein sequence ID" value="AAF79519.1"/>
    <property type="status" value="ALT_SEQ"/>
    <property type="molecule type" value="Genomic_DNA"/>
</dbReference>
<dbReference type="EMBL" id="CP002684">
    <property type="protein sequence ID" value="AEE32257.1"/>
    <property type="molecule type" value="Genomic_DNA"/>
</dbReference>
<dbReference type="EMBL" id="CP002684">
    <property type="protein sequence ID" value="ANM60896.1"/>
    <property type="molecule type" value="Genomic_DNA"/>
</dbReference>
<dbReference type="EMBL" id="AF439847">
    <property type="protein sequence ID" value="AAL27515.1"/>
    <property type="molecule type" value="mRNA"/>
</dbReference>
<dbReference type="EMBL" id="AY125568">
    <property type="protein sequence ID" value="AAM78078.1"/>
    <property type="molecule type" value="mRNA"/>
</dbReference>
<dbReference type="EMBL" id="AY088346">
    <property type="protein sequence ID" value="AAM65885.1"/>
    <property type="molecule type" value="mRNA"/>
</dbReference>
<dbReference type="RefSeq" id="NP_001323146.1">
    <property type="nucleotide sequence ID" value="NM_001333300.1"/>
</dbReference>
<dbReference type="RefSeq" id="NP_175250.1">
    <property type="nucleotide sequence ID" value="NM_103712.3"/>
</dbReference>
<dbReference type="SMR" id="Q943Z6"/>
<dbReference type="FunCoup" id="Q943Z6">
    <property type="interactions" value="3947"/>
</dbReference>
<dbReference type="STRING" id="3702.Q943Z6"/>
<dbReference type="iPTMnet" id="Q943Z6"/>
<dbReference type="PaxDb" id="3702-AT1G48160.1"/>
<dbReference type="ProteomicsDB" id="226878"/>
<dbReference type="EnsemblPlants" id="AT1G48160.1">
    <property type="protein sequence ID" value="AT1G48160.1"/>
    <property type="gene ID" value="AT1G48160"/>
</dbReference>
<dbReference type="EnsemblPlants" id="AT1G48160.2">
    <property type="protein sequence ID" value="AT1G48160.2"/>
    <property type="gene ID" value="AT1G48160"/>
</dbReference>
<dbReference type="GeneID" id="841235"/>
<dbReference type="Gramene" id="AT1G48160.1">
    <property type="protein sequence ID" value="AT1G48160.1"/>
    <property type="gene ID" value="AT1G48160"/>
</dbReference>
<dbReference type="Gramene" id="AT1G48160.2">
    <property type="protein sequence ID" value="AT1G48160.2"/>
    <property type="gene ID" value="AT1G48160"/>
</dbReference>
<dbReference type="KEGG" id="ath:AT1G48160"/>
<dbReference type="Araport" id="AT1G48160"/>
<dbReference type="TAIR" id="AT1G48160"/>
<dbReference type="eggNOG" id="KOG3198">
    <property type="taxonomic scope" value="Eukaryota"/>
</dbReference>
<dbReference type="HOGENOM" id="CLU_064201_1_0_1"/>
<dbReference type="InParanoid" id="Q943Z6"/>
<dbReference type="OMA" id="QMERWIC"/>
<dbReference type="OrthoDB" id="2190947at2759"/>
<dbReference type="PhylomeDB" id="Q943Z6"/>
<dbReference type="PRO" id="PR:Q943Z6"/>
<dbReference type="Proteomes" id="UP000006548">
    <property type="component" value="Chromosome 1"/>
</dbReference>
<dbReference type="ExpressionAtlas" id="Q943Z6">
    <property type="expression patterns" value="baseline and differential"/>
</dbReference>
<dbReference type="GO" id="GO:0005730">
    <property type="term" value="C:nucleolus"/>
    <property type="evidence" value="ECO:0007669"/>
    <property type="project" value="UniProtKB-SubCell"/>
</dbReference>
<dbReference type="GO" id="GO:0005634">
    <property type="term" value="C:nucleus"/>
    <property type="evidence" value="ECO:0007005"/>
    <property type="project" value="TAIR"/>
</dbReference>
<dbReference type="GO" id="GO:0005786">
    <property type="term" value="C:signal recognition particle, endoplasmic reticulum targeting"/>
    <property type="evidence" value="ECO:0007669"/>
    <property type="project" value="UniProtKB-KW"/>
</dbReference>
<dbReference type="GO" id="GO:0008312">
    <property type="term" value="F:7S RNA binding"/>
    <property type="evidence" value="ECO:0007669"/>
    <property type="project" value="InterPro"/>
</dbReference>
<dbReference type="GO" id="GO:0006614">
    <property type="term" value="P:SRP-dependent cotranslational protein targeting to membrane"/>
    <property type="evidence" value="ECO:0007669"/>
    <property type="project" value="InterPro"/>
</dbReference>
<dbReference type="FunFam" id="3.30.56.30:FF:000002">
    <property type="entry name" value="Signal recognition particle 19kDa"/>
    <property type="match status" value="1"/>
</dbReference>
<dbReference type="Gene3D" id="3.30.56.30">
    <property type="entry name" value="Signal recognition particle, SRP19-like subunit"/>
    <property type="match status" value="1"/>
</dbReference>
<dbReference type="InterPro" id="IPR002778">
    <property type="entry name" value="Signal_recog_particle_SRP19"/>
</dbReference>
<dbReference type="InterPro" id="IPR036521">
    <property type="entry name" value="SRP19-like_sf"/>
</dbReference>
<dbReference type="PANTHER" id="PTHR17453">
    <property type="entry name" value="SIGNAL RECOGNITION PARTICLE 19 KD PROTEIN"/>
    <property type="match status" value="1"/>
</dbReference>
<dbReference type="PANTHER" id="PTHR17453:SF0">
    <property type="entry name" value="SIGNAL RECOGNITION PARTICLE 19 KDA PROTEIN"/>
    <property type="match status" value="1"/>
</dbReference>
<dbReference type="Pfam" id="PF01922">
    <property type="entry name" value="SRP19"/>
    <property type="match status" value="1"/>
</dbReference>
<dbReference type="SUPFAM" id="SSF69695">
    <property type="entry name" value="SRP19"/>
    <property type="match status" value="1"/>
</dbReference>
<reference key="1">
    <citation type="journal article" date="2000" name="Nature">
        <title>Sequence and analysis of chromosome 1 of the plant Arabidopsis thaliana.</title>
        <authorList>
            <person name="Theologis A."/>
            <person name="Ecker J.R."/>
            <person name="Palm C.J."/>
            <person name="Federspiel N.A."/>
            <person name="Kaul S."/>
            <person name="White O."/>
            <person name="Alonso J."/>
            <person name="Altafi H."/>
            <person name="Araujo R."/>
            <person name="Bowman C.L."/>
            <person name="Brooks S.Y."/>
            <person name="Buehler E."/>
            <person name="Chan A."/>
            <person name="Chao Q."/>
            <person name="Chen H."/>
            <person name="Cheuk R.F."/>
            <person name="Chin C.W."/>
            <person name="Chung M.K."/>
            <person name="Conn L."/>
            <person name="Conway A.B."/>
            <person name="Conway A.R."/>
            <person name="Creasy T.H."/>
            <person name="Dewar K."/>
            <person name="Dunn P."/>
            <person name="Etgu P."/>
            <person name="Feldblyum T.V."/>
            <person name="Feng J.-D."/>
            <person name="Fong B."/>
            <person name="Fujii C.Y."/>
            <person name="Gill J.E."/>
            <person name="Goldsmith A.D."/>
            <person name="Haas B."/>
            <person name="Hansen N.F."/>
            <person name="Hughes B."/>
            <person name="Huizar L."/>
            <person name="Hunter J.L."/>
            <person name="Jenkins J."/>
            <person name="Johnson-Hopson C."/>
            <person name="Khan S."/>
            <person name="Khaykin E."/>
            <person name="Kim C.J."/>
            <person name="Koo H.L."/>
            <person name="Kremenetskaia I."/>
            <person name="Kurtz D.B."/>
            <person name="Kwan A."/>
            <person name="Lam B."/>
            <person name="Langin-Hooper S."/>
            <person name="Lee A."/>
            <person name="Lee J.M."/>
            <person name="Lenz C.A."/>
            <person name="Li J.H."/>
            <person name="Li Y.-P."/>
            <person name="Lin X."/>
            <person name="Liu S.X."/>
            <person name="Liu Z.A."/>
            <person name="Luros J.S."/>
            <person name="Maiti R."/>
            <person name="Marziali A."/>
            <person name="Militscher J."/>
            <person name="Miranda M."/>
            <person name="Nguyen M."/>
            <person name="Nierman W.C."/>
            <person name="Osborne B.I."/>
            <person name="Pai G."/>
            <person name="Peterson J."/>
            <person name="Pham P.K."/>
            <person name="Rizzo M."/>
            <person name="Rooney T."/>
            <person name="Rowley D."/>
            <person name="Sakano H."/>
            <person name="Salzberg S.L."/>
            <person name="Schwartz J.R."/>
            <person name="Shinn P."/>
            <person name="Southwick A.M."/>
            <person name="Sun H."/>
            <person name="Tallon L.J."/>
            <person name="Tambunga G."/>
            <person name="Toriumi M.J."/>
            <person name="Town C.D."/>
            <person name="Utterback T."/>
            <person name="Van Aken S."/>
            <person name="Vaysberg M."/>
            <person name="Vysotskaia V.S."/>
            <person name="Walker M."/>
            <person name="Wu D."/>
            <person name="Yu G."/>
            <person name="Fraser C.M."/>
            <person name="Venter J.C."/>
            <person name="Davis R.W."/>
        </authorList>
    </citation>
    <scope>NUCLEOTIDE SEQUENCE [LARGE SCALE GENOMIC DNA]</scope>
    <source>
        <strain>cv. Columbia</strain>
    </source>
</reference>
<reference key="2">
    <citation type="journal article" date="2017" name="Plant J.">
        <title>Araport11: a complete reannotation of the Arabidopsis thaliana reference genome.</title>
        <authorList>
            <person name="Cheng C.Y."/>
            <person name="Krishnakumar V."/>
            <person name="Chan A.P."/>
            <person name="Thibaud-Nissen F."/>
            <person name="Schobel S."/>
            <person name="Town C.D."/>
        </authorList>
    </citation>
    <scope>GENOME REANNOTATION</scope>
    <source>
        <strain>cv. Columbia</strain>
    </source>
</reference>
<reference key="3">
    <citation type="journal article" date="2003" name="Science">
        <title>Empirical analysis of transcriptional activity in the Arabidopsis genome.</title>
        <authorList>
            <person name="Yamada K."/>
            <person name="Lim J."/>
            <person name="Dale J.M."/>
            <person name="Chen H."/>
            <person name="Shinn P."/>
            <person name="Palm C.J."/>
            <person name="Southwick A.M."/>
            <person name="Wu H.C."/>
            <person name="Kim C.J."/>
            <person name="Nguyen M."/>
            <person name="Pham P.K."/>
            <person name="Cheuk R.F."/>
            <person name="Karlin-Newmann G."/>
            <person name="Liu S.X."/>
            <person name="Lam B."/>
            <person name="Sakano H."/>
            <person name="Wu T."/>
            <person name="Yu G."/>
            <person name="Miranda M."/>
            <person name="Quach H.L."/>
            <person name="Tripp M."/>
            <person name="Chang C.H."/>
            <person name="Lee J.M."/>
            <person name="Toriumi M.J."/>
            <person name="Chan M.M."/>
            <person name="Tang C.C."/>
            <person name="Onodera C.S."/>
            <person name="Deng J.M."/>
            <person name="Akiyama K."/>
            <person name="Ansari Y."/>
            <person name="Arakawa T."/>
            <person name="Banh J."/>
            <person name="Banno F."/>
            <person name="Bowser L."/>
            <person name="Brooks S.Y."/>
            <person name="Carninci P."/>
            <person name="Chao Q."/>
            <person name="Choy N."/>
            <person name="Enju A."/>
            <person name="Goldsmith A.D."/>
            <person name="Gurjal M."/>
            <person name="Hansen N.F."/>
            <person name="Hayashizaki Y."/>
            <person name="Johnson-Hopson C."/>
            <person name="Hsuan V.W."/>
            <person name="Iida K."/>
            <person name="Karnes M."/>
            <person name="Khan S."/>
            <person name="Koesema E."/>
            <person name="Ishida J."/>
            <person name="Jiang P.X."/>
            <person name="Jones T."/>
            <person name="Kawai J."/>
            <person name="Kamiya A."/>
            <person name="Meyers C."/>
            <person name="Nakajima M."/>
            <person name="Narusaka M."/>
            <person name="Seki M."/>
            <person name="Sakurai T."/>
            <person name="Satou M."/>
            <person name="Tamse R."/>
            <person name="Vaysberg M."/>
            <person name="Wallender E.K."/>
            <person name="Wong C."/>
            <person name="Yamamura Y."/>
            <person name="Yuan S."/>
            <person name="Shinozaki K."/>
            <person name="Davis R.W."/>
            <person name="Theologis A."/>
            <person name="Ecker J.R."/>
        </authorList>
    </citation>
    <scope>NUCLEOTIDE SEQUENCE [LARGE SCALE MRNA]</scope>
    <source>
        <strain>cv. Columbia</strain>
    </source>
</reference>
<reference key="4">
    <citation type="submission" date="2002-03" db="EMBL/GenBank/DDBJ databases">
        <title>Full-length cDNA from Arabidopsis thaliana.</title>
        <authorList>
            <person name="Brover V.V."/>
            <person name="Troukhan M.E."/>
            <person name="Alexandrov N.A."/>
            <person name="Lu Y.-P."/>
            <person name="Flavell R.B."/>
            <person name="Feldmann K.A."/>
        </authorList>
    </citation>
    <scope>NUCLEOTIDE SEQUENCE [LARGE SCALE MRNA]</scope>
</reference>
<reference key="5">
    <citation type="journal article" date="2012" name="Mol. Cell. Proteomics">
        <title>Comparative large-scale characterisation of plant vs. mammal proteins reveals similar and idiosyncratic N-alpha acetylation features.</title>
        <authorList>
            <person name="Bienvenut W.V."/>
            <person name="Sumpton D."/>
            <person name="Martinez A."/>
            <person name="Lilla S."/>
            <person name="Espagne C."/>
            <person name="Meinnel T."/>
            <person name="Giglione C."/>
        </authorList>
    </citation>
    <scope>ACETYLATION [LARGE SCALE ANALYSIS] AT MET-1</scope>
    <scope>IDENTIFICATION BY MASS SPECTROMETRY [LARGE SCALE ANALYSIS]</scope>
</reference>
<evidence type="ECO:0000250" key="1">
    <source>
        <dbReference type="UniProtKB" id="J9PAS6"/>
    </source>
</evidence>
<evidence type="ECO:0000250" key="2">
    <source>
        <dbReference type="UniProtKB" id="P09132"/>
    </source>
</evidence>
<evidence type="ECO:0000256" key="3">
    <source>
        <dbReference type="SAM" id="MobiDB-lite"/>
    </source>
</evidence>
<evidence type="ECO:0000305" key="4"/>
<evidence type="ECO:0007744" key="5">
    <source>
    </source>
</evidence>